<name>DEGPL_CHLTR</name>
<reference key="1">
    <citation type="journal article" date="1990" name="Gene">
        <title>Cloning, characterization and sequence of a novel 59-kDa protein of Chlamydia trachomatis.</title>
        <authorList>
            <person name="Kahane S."/>
            <person name="Weinstein Y."/>
            <person name="Sarov I."/>
        </authorList>
    </citation>
    <scope>NUCLEOTIDE SEQUENCE [GENOMIC DNA]</scope>
    <source>
        <strain>L2</strain>
    </source>
</reference>
<reference key="2">
    <citation type="journal article" date="1998" name="Science">
        <title>Genome sequence of an obligate intracellular pathogen of humans: Chlamydia trachomatis.</title>
        <authorList>
            <person name="Stephens R.S."/>
            <person name="Kalman S."/>
            <person name="Lammel C.J."/>
            <person name="Fan J."/>
            <person name="Marathe R."/>
            <person name="Aravind L."/>
            <person name="Mitchell W.P."/>
            <person name="Olinger L."/>
            <person name="Tatusov R.L."/>
            <person name="Zhao Q."/>
            <person name="Koonin E.V."/>
            <person name="Davis R.W."/>
        </authorList>
    </citation>
    <scope>NUCLEOTIDE SEQUENCE [LARGE SCALE GENOMIC DNA]</scope>
    <source>
        <strain>ATCC VR-885 / DSM 19411 / UW-3/Cx</strain>
    </source>
</reference>
<accession>P18584</accession>
<accession>O84830</accession>
<protein>
    <recommendedName>
        <fullName>Probable periplasmic serine endoprotease DegP-like</fullName>
        <ecNumber>3.4.21.107</ecNumber>
    </recommendedName>
    <alternativeName>
        <fullName>59 kDa immunogenic protein</fullName>
    </alternativeName>
    <alternativeName>
        <fullName>Protease Do</fullName>
    </alternativeName>
    <alternativeName>
        <fullName>SK59</fullName>
    </alternativeName>
</protein>
<comment type="function">
    <text evidence="1">Might be efficient in the degradation of transiently denatured and unfolded proteins which accumulate in the periplasm following stress conditions.</text>
</comment>
<comment type="catalytic activity">
    <reaction>
        <text>Acts on substrates that are at least partially unfolded. The cleavage site P1 residue is normally between a pair of hydrophobic residues, such as Val-|-Val.</text>
        <dbReference type="EC" id="3.4.21.107"/>
    </reaction>
</comment>
<comment type="subcellular location">
    <subcellularLocation>
        <location evidence="4">Periplasm</location>
    </subcellularLocation>
</comment>
<comment type="similarity">
    <text evidence="4">Belongs to the peptidase S1C family.</text>
</comment>
<comment type="sequence caution" evidence="4">
    <conflict type="miscellaneous discrepancy">
        <sequence resource="EMBL-CDS" id="AAA23116"/>
    </conflict>
    <text>Sequencing errors. The putative 59 kDa immunogenic protein was translated on the complementary strand to that of what seems to be the real protein.</text>
</comment>
<dbReference type="EC" id="3.4.21.107"/>
<dbReference type="EMBL" id="M31119">
    <property type="protein sequence ID" value="AAA23116.1"/>
    <property type="status" value="ALT_SEQ"/>
    <property type="molecule type" value="Genomic_DNA"/>
</dbReference>
<dbReference type="EMBL" id="AE001273">
    <property type="protein sequence ID" value="AAC68420.1"/>
    <property type="molecule type" value="Genomic_DNA"/>
</dbReference>
<dbReference type="PIR" id="H71465">
    <property type="entry name" value="H71465"/>
</dbReference>
<dbReference type="PIR" id="JQ0642">
    <property type="entry name" value="JQ0642"/>
</dbReference>
<dbReference type="RefSeq" id="NP_220344.1">
    <property type="nucleotide sequence ID" value="NC_000117.1"/>
</dbReference>
<dbReference type="RefSeq" id="WP_009872209.1">
    <property type="nucleotide sequence ID" value="NC_000117.1"/>
</dbReference>
<dbReference type="SMR" id="P18584"/>
<dbReference type="FunCoup" id="P18584">
    <property type="interactions" value="264"/>
</dbReference>
<dbReference type="STRING" id="272561.CT_823"/>
<dbReference type="BindingDB" id="P18584"/>
<dbReference type="ChEMBL" id="CHEMBL4888439"/>
<dbReference type="MEROPS" id="S01.480"/>
<dbReference type="EnsemblBacteria" id="AAC68420">
    <property type="protein sequence ID" value="AAC68420"/>
    <property type="gene ID" value="CT_823"/>
</dbReference>
<dbReference type="GeneID" id="884623"/>
<dbReference type="KEGG" id="ctr:CT_823"/>
<dbReference type="PATRIC" id="fig|272561.5.peg.909"/>
<dbReference type="HOGENOM" id="CLU_020120_1_0_0"/>
<dbReference type="InParanoid" id="P18584"/>
<dbReference type="OrthoDB" id="9758917at2"/>
<dbReference type="Proteomes" id="UP000000431">
    <property type="component" value="Chromosome"/>
</dbReference>
<dbReference type="GO" id="GO:0030288">
    <property type="term" value="C:outer membrane-bounded periplasmic space"/>
    <property type="evidence" value="ECO:0000250"/>
    <property type="project" value="UniProtKB"/>
</dbReference>
<dbReference type="GO" id="GO:0004252">
    <property type="term" value="F:serine-type endopeptidase activity"/>
    <property type="evidence" value="ECO:0000250"/>
    <property type="project" value="UniProtKB"/>
</dbReference>
<dbReference type="GO" id="GO:0006508">
    <property type="term" value="P:proteolysis"/>
    <property type="evidence" value="ECO:0007669"/>
    <property type="project" value="UniProtKB-KW"/>
</dbReference>
<dbReference type="CDD" id="cd10839">
    <property type="entry name" value="cpPDZ1_DegP-like"/>
    <property type="match status" value="1"/>
</dbReference>
<dbReference type="FunFam" id="2.30.42.10:FF:000037">
    <property type="entry name" value="Periplasmic serine endoprotease DegP-like"/>
    <property type="match status" value="1"/>
</dbReference>
<dbReference type="FunFam" id="2.40.10.120:FF:000007">
    <property type="entry name" value="Periplasmic serine endoprotease DegP-like"/>
    <property type="match status" value="1"/>
</dbReference>
<dbReference type="FunFam" id="2.40.10.10:FF:000001">
    <property type="entry name" value="Periplasmic serine protease DegS"/>
    <property type="match status" value="1"/>
</dbReference>
<dbReference type="Gene3D" id="2.30.42.10">
    <property type="match status" value="2"/>
</dbReference>
<dbReference type="Gene3D" id="2.40.10.120">
    <property type="match status" value="1"/>
</dbReference>
<dbReference type="InterPro" id="IPR001478">
    <property type="entry name" value="PDZ"/>
</dbReference>
<dbReference type="InterPro" id="IPR041489">
    <property type="entry name" value="PDZ_6"/>
</dbReference>
<dbReference type="InterPro" id="IPR036034">
    <property type="entry name" value="PDZ_sf"/>
</dbReference>
<dbReference type="InterPro" id="IPR011782">
    <property type="entry name" value="Pept_S1C_Do"/>
</dbReference>
<dbReference type="InterPro" id="IPR009003">
    <property type="entry name" value="Peptidase_S1_PA"/>
</dbReference>
<dbReference type="InterPro" id="IPR001940">
    <property type="entry name" value="Peptidase_S1C"/>
</dbReference>
<dbReference type="NCBIfam" id="TIGR02037">
    <property type="entry name" value="degP_htrA_DO"/>
    <property type="match status" value="1"/>
</dbReference>
<dbReference type="PANTHER" id="PTHR22939">
    <property type="entry name" value="SERINE PROTEASE FAMILY S1C HTRA-RELATED"/>
    <property type="match status" value="1"/>
</dbReference>
<dbReference type="PANTHER" id="PTHR22939:SF129">
    <property type="entry name" value="SERINE PROTEASE HTRA2, MITOCHONDRIAL"/>
    <property type="match status" value="1"/>
</dbReference>
<dbReference type="Pfam" id="PF13180">
    <property type="entry name" value="PDZ_2"/>
    <property type="match status" value="1"/>
</dbReference>
<dbReference type="Pfam" id="PF17820">
    <property type="entry name" value="PDZ_6"/>
    <property type="match status" value="1"/>
</dbReference>
<dbReference type="Pfam" id="PF13365">
    <property type="entry name" value="Trypsin_2"/>
    <property type="match status" value="1"/>
</dbReference>
<dbReference type="PRINTS" id="PR00834">
    <property type="entry name" value="PROTEASES2C"/>
</dbReference>
<dbReference type="SMART" id="SM00228">
    <property type="entry name" value="PDZ"/>
    <property type="match status" value="2"/>
</dbReference>
<dbReference type="SUPFAM" id="SSF50156">
    <property type="entry name" value="PDZ domain-like"/>
    <property type="match status" value="2"/>
</dbReference>
<dbReference type="SUPFAM" id="SSF50494">
    <property type="entry name" value="Trypsin-like serine proteases"/>
    <property type="match status" value="1"/>
</dbReference>
<dbReference type="PROSITE" id="PS50106">
    <property type="entry name" value="PDZ"/>
    <property type="match status" value="2"/>
</dbReference>
<feature type="signal peptide" evidence="2">
    <location>
        <begin position="1"/>
        <end position="16"/>
    </location>
</feature>
<feature type="chain" id="PRO_0000026932" description="Probable periplasmic serine endoprotease DegP-like">
    <location>
        <begin position="17"/>
        <end position="497"/>
    </location>
</feature>
<feature type="domain" description="PDZ 1" evidence="3">
    <location>
        <begin position="290"/>
        <end position="381"/>
    </location>
</feature>
<feature type="domain" description="PDZ 2" evidence="3">
    <location>
        <begin position="394"/>
        <end position="485"/>
    </location>
</feature>
<feature type="region of interest" description="Serine protease">
    <location>
        <begin position="128"/>
        <end position="289"/>
    </location>
</feature>
<feature type="active site" description="Charge relay system" evidence="2">
    <location>
        <position position="143"/>
    </location>
</feature>
<feature type="active site" description="Charge relay system" evidence="2">
    <location>
        <position position="173"/>
    </location>
</feature>
<feature type="active site" description="Charge relay system" evidence="2">
    <location>
        <position position="247"/>
    </location>
</feature>
<feature type="binding site" evidence="1">
    <location>
        <begin position="245"/>
        <end position="247"/>
    </location>
    <ligand>
        <name>substrate</name>
    </ligand>
</feature>
<feature type="binding site" evidence="1">
    <location>
        <begin position="302"/>
        <end position="306"/>
    </location>
    <ligand>
        <name>substrate</name>
    </ligand>
</feature>
<organism>
    <name type="scientific">Chlamydia trachomatis serovar D (strain ATCC VR-885 / DSM 19411 / UW-3/Cx)</name>
    <dbReference type="NCBI Taxonomy" id="272561"/>
    <lineage>
        <taxon>Bacteria</taxon>
        <taxon>Pseudomonadati</taxon>
        <taxon>Chlamydiota</taxon>
        <taxon>Chlamydiia</taxon>
        <taxon>Chlamydiales</taxon>
        <taxon>Chlamydiaceae</taxon>
        <taxon>Chlamydia/Chlamydophila group</taxon>
        <taxon>Chlamydia</taxon>
    </lineage>
</organism>
<sequence length="497" mass="53244">MMKRLLCVLLSTSVFSSPMLGYSASKKDSKADICLAVSSGDQEVSQEDLLKEVSRGFSRVAAKATPGVVYIENFPKTGNQAIASPGNKRGFQENPFDYFNDEFFNRFFGLPSHREQQRPQQRDAVRGTGFIVSEDGYVVTNHHVVEDAGKIHVTLHDGQKYTAKIVGLDPKTDLAVIKIQAEKLPFLTFGNSDQLQIGDWAIAIGNPFGLQATVTVGVISAKGRNQLHIVDFEDFIQTDAAINPGNSGGPLLNINGQVIGVNTAIVSGSGGYIGIGFAIPSLMAKRVIDQLISDGQVTRGFLGVTLQPIDSELATCYKLEKVYGALVTDVVKGSPAEKAGLRQEDVIVAYNGKEVESLSALRNAISLMMPGTRVVLKIVREGKTIEIPVTVTQIPTEDGVSALQKMGVRVQNITPEICKKLGLAADTRGILVVAVEAGSPAASAGVAPGQLILAVNRQRVASVEELNQVLKNSKGENVLLMVSQGDVVRFIVLKSDE</sequence>
<proteinExistence type="inferred from homology"/>
<evidence type="ECO:0000250" key="1"/>
<evidence type="ECO:0000255" key="2"/>
<evidence type="ECO:0000255" key="3">
    <source>
        <dbReference type="PROSITE-ProRule" id="PRU00143"/>
    </source>
</evidence>
<evidence type="ECO:0000305" key="4"/>
<gene>
    <name type="primary">htrA</name>
    <name type="ordered locus">CT_823</name>
</gene>
<keyword id="KW-0378">Hydrolase</keyword>
<keyword id="KW-0574">Periplasm</keyword>
<keyword id="KW-0645">Protease</keyword>
<keyword id="KW-1185">Reference proteome</keyword>
<keyword id="KW-0677">Repeat</keyword>
<keyword id="KW-0720">Serine protease</keyword>
<keyword id="KW-0732">Signal</keyword>
<keyword id="KW-0346">Stress response</keyword>